<gene>
    <name type="primary">SSU1</name>
    <name type="ORF">MCYG_08415</name>
</gene>
<name>SSU1_ARTOC</name>
<feature type="chain" id="PRO_0000384414" description="Sulfite efflux pump SSU1">
    <location>
        <begin position="1"/>
        <end position="375"/>
    </location>
</feature>
<feature type="topological domain" description="Cytoplasmic" evidence="2">
    <location>
        <begin position="1"/>
        <end position="25"/>
    </location>
</feature>
<feature type="transmembrane region" description="Helical" evidence="2">
    <location>
        <begin position="26"/>
        <end position="46"/>
    </location>
</feature>
<feature type="topological domain" description="Extracellular" evidence="2">
    <location>
        <begin position="47"/>
        <end position="59"/>
    </location>
</feature>
<feature type="transmembrane region" description="Helical" evidence="2">
    <location>
        <begin position="60"/>
        <end position="80"/>
    </location>
</feature>
<feature type="topological domain" description="Cytoplasmic" evidence="2">
    <location>
        <begin position="81"/>
        <end position="101"/>
    </location>
</feature>
<feature type="transmembrane region" description="Helical" evidence="2">
    <location>
        <begin position="102"/>
        <end position="122"/>
    </location>
</feature>
<feature type="topological domain" description="Extracellular" evidence="2">
    <location>
        <begin position="123"/>
        <end position="135"/>
    </location>
</feature>
<feature type="transmembrane region" description="Helical" evidence="2">
    <location>
        <begin position="136"/>
        <end position="156"/>
    </location>
</feature>
<feature type="topological domain" description="Cytoplasmic" evidence="2">
    <location>
        <begin position="157"/>
        <end position="167"/>
    </location>
</feature>
<feature type="transmembrane region" description="Helical" evidence="2">
    <location>
        <begin position="168"/>
        <end position="188"/>
    </location>
</feature>
<feature type="topological domain" description="Extracellular" evidence="2">
    <location>
        <begin position="189"/>
        <end position="200"/>
    </location>
</feature>
<feature type="transmembrane region" description="Helical" evidence="2">
    <location>
        <begin position="201"/>
        <end position="221"/>
    </location>
</feature>
<feature type="topological domain" description="Cytoplasmic" evidence="2">
    <location>
        <begin position="222"/>
        <end position="234"/>
    </location>
</feature>
<feature type="transmembrane region" description="Helical" evidence="2">
    <location>
        <begin position="235"/>
        <end position="255"/>
    </location>
</feature>
<feature type="topological domain" description="Extracellular" evidence="2">
    <location>
        <begin position="256"/>
        <end position="277"/>
    </location>
</feature>
<feature type="transmembrane region" description="Helical" evidence="2">
    <location>
        <begin position="278"/>
        <end position="298"/>
    </location>
</feature>
<feature type="topological domain" description="Cytoplasmic" evidence="2">
    <location>
        <begin position="299"/>
        <end position="309"/>
    </location>
</feature>
<feature type="transmembrane region" description="Helical" evidence="2">
    <location>
        <begin position="310"/>
        <end position="330"/>
    </location>
</feature>
<feature type="topological domain" description="Extracellular" evidence="2">
    <location>
        <begin position="331"/>
        <end position="343"/>
    </location>
</feature>
<feature type="transmembrane region" description="Helical" evidence="2">
    <location>
        <begin position="344"/>
        <end position="364"/>
    </location>
</feature>
<feature type="topological domain" description="Cytoplasmic" evidence="2">
    <location>
        <begin position="365"/>
        <end position="375"/>
    </location>
</feature>
<feature type="glycosylation site" description="N-linked (GlcNAc...) asparagine" evidence="2">
    <location>
        <position position="193"/>
    </location>
</feature>
<proteinExistence type="inferred from homology"/>
<reference key="1">
    <citation type="journal article" date="2012" name="MBio">
        <title>Comparative genome analysis of Trichophyton rubrum and related dermatophytes reveals candidate genes involved in infection.</title>
        <authorList>
            <person name="Martinez D.A."/>
            <person name="Oliver B.G."/>
            <person name="Graeser Y."/>
            <person name="Goldberg J.M."/>
            <person name="Li W."/>
            <person name="Martinez-Rossi N.M."/>
            <person name="Monod M."/>
            <person name="Shelest E."/>
            <person name="Barton R.C."/>
            <person name="Birch E."/>
            <person name="Brakhage A.A."/>
            <person name="Chen Z."/>
            <person name="Gurr S.J."/>
            <person name="Heiman D."/>
            <person name="Heitman J."/>
            <person name="Kosti I."/>
            <person name="Rossi A."/>
            <person name="Saif S."/>
            <person name="Samalova M."/>
            <person name="Saunders C.W."/>
            <person name="Shea T."/>
            <person name="Summerbell R.C."/>
            <person name="Xu J."/>
            <person name="Young S."/>
            <person name="Zeng Q."/>
            <person name="Birren B.W."/>
            <person name="Cuomo C.A."/>
            <person name="White T.C."/>
        </authorList>
    </citation>
    <scope>NUCLEOTIDE SEQUENCE [LARGE SCALE GENOMIC DNA]</scope>
    <source>
        <strain>ATCC MYA-4605 / CBS 113480</strain>
    </source>
</reference>
<keyword id="KW-1003">Cell membrane</keyword>
<keyword id="KW-0325">Glycoprotein</keyword>
<keyword id="KW-0472">Membrane</keyword>
<keyword id="KW-1185">Reference proteome</keyword>
<keyword id="KW-0812">Transmembrane</keyword>
<keyword id="KW-1133">Transmembrane helix</keyword>
<keyword id="KW-0813">Transport</keyword>
<sequence>MPSGSGFQNIEEAGEKARRRDDWIAISNFHPGWFSVNMGTGITAILLQNLPYQFPGLHYIAVVLFVLNVIIFFFFLTISITRYALWPEKFKAMLAHPAHSMLLGTFPMGFATIINCIIFICVPVWGDWAARFAWGLWWVDATVSIAICYFVPFMLMTKHTSSLETMTAAWLLPIVAPVVAAASGGVVADALKNDTHALITILVCYVMWGSAVPLAMVILVIYFQRLALHKLVPRAAIVSALLPIGPLGQGGFGLMQLGVVARRVFPRLDFLAPIAGEIFYVMGAFIAMIMWGFGLIWLWFALASFTRGKFYFNIGWWAFTFPLGVFTTATTQMGKEFNSVVFDVLGTFFSIVVAAMWVMVFALTVYKSCTKELFK</sequence>
<accession>C5G0E3</accession>
<dbReference type="EMBL" id="DS995708">
    <property type="protein sequence ID" value="EEQ35596.1"/>
    <property type="status" value="ALT_INIT"/>
    <property type="molecule type" value="Genomic_DNA"/>
</dbReference>
<dbReference type="RefSeq" id="XP_002843332.1">
    <property type="nucleotide sequence ID" value="XM_002843286.1"/>
</dbReference>
<dbReference type="SMR" id="C5G0E3"/>
<dbReference type="STRING" id="554155.C5G0E3"/>
<dbReference type="GlyCosmos" id="C5G0E3">
    <property type="glycosylation" value="1 site, No reported glycans"/>
</dbReference>
<dbReference type="GeneID" id="9227334"/>
<dbReference type="eggNOG" id="ENOG502QT02">
    <property type="taxonomic scope" value="Eukaryota"/>
</dbReference>
<dbReference type="HOGENOM" id="CLU_030057_6_3_1"/>
<dbReference type="OrthoDB" id="1099at2759"/>
<dbReference type="Proteomes" id="UP000002035">
    <property type="component" value="Unassembled WGS sequence"/>
</dbReference>
<dbReference type="GO" id="GO:0005886">
    <property type="term" value="C:plasma membrane"/>
    <property type="evidence" value="ECO:0007669"/>
    <property type="project" value="UniProtKB-SubCell"/>
</dbReference>
<dbReference type="GO" id="GO:0000319">
    <property type="term" value="F:sulfite transmembrane transporter activity"/>
    <property type="evidence" value="ECO:0007669"/>
    <property type="project" value="TreeGrafter"/>
</dbReference>
<dbReference type="CDD" id="cd09318">
    <property type="entry name" value="TDT_SSU1"/>
    <property type="match status" value="1"/>
</dbReference>
<dbReference type="FunFam" id="1.50.10.150:FF:000004">
    <property type="entry name" value="Malic acid transporter"/>
    <property type="match status" value="1"/>
</dbReference>
<dbReference type="Gene3D" id="1.50.10.150">
    <property type="entry name" value="Voltage-dependent anion channel"/>
    <property type="match status" value="1"/>
</dbReference>
<dbReference type="InterPro" id="IPR004695">
    <property type="entry name" value="SLAC1/Mae1/Ssu1/TehA"/>
</dbReference>
<dbReference type="InterPro" id="IPR051629">
    <property type="entry name" value="Sulfite_efflux_TDT"/>
</dbReference>
<dbReference type="InterPro" id="IPR038665">
    <property type="entry name" value="Voltage-dep_anion_channel_sf"/>
</dbReference>
<dbReference type="PANTHER" id="PTHR31686">
    <property type="match status" value="1"/>
</dbReference>
<dbReference type="PANTHER" id="PTHR31686:SF1">
    <property type="entry name" value="SULFITE EFFLUX PUMP SSU1"/>
    <property type="match status" value="1"/>
</dbReference>
<dbReference type="Pfam" id="PF03595">
    <property type="entry name" value="SLAC1"/>
    <property type="match status" value="1"/>
</dbReference>
<protein>
    <recommendedName>
        <fullName>Sulfite efflux pump SSU1</fullName>
    </recommendedName>
</protein>
<organism>
    <name type="scientific">Arthroderma otae (strain ATCC MYA-4605 / CBS 113480)</name>
    <name type="common">Microsporum canis</name>
    <dbReference type="NCBI Taxonomy" id="554155"/>
    <lineage>
        <taxon>Eukaryota</taxon>
        <taxon>Fungi</taxon>
        <taxon>Dikarya</taxon>
        <taxon>Ascomycota</taxon>
        <taxon>Pezizomycotina</taxon>
        <taxon>Eurotiomycetes</taxon>
        <taxon>Eurotiomycetidae</taxon>
        <taxon>Onygenales</taxon>
        <taxon>Arthrodermataceae</taxon>
        <taxon>Microsporum</taxon>
    </lineage>
</organism>
<evidence type="ECO:0000250" key="1"/>
<evidence type="ECO:0000255" key="2"/>
<evidence type="ECO:0000305" key="3"/>
<comment type="function">
    <text evidence="1">Sulphite efflux pump required for the secretion of sulphite as a reducing agent. In the presence of sulphite, cystine in keratin is directly cleaved to cysteine and S-sulphocysteine, and thereby, reduced proteins become accessible to hydrolysis by a variety of secreted endo- and exoproteases. Excretion of sulphite mediated by an efflux pump also represents a detoxification pathway for dermatophytes during infection of the epidermal stratum corneum, hair and nails, which are rich in cysteine (By similarity).</text>
</comment>
<comment type="subcellular location">
    <subcellularLocation>
        <location evidence="3">Cell membrane</location>
        <topology evidence="3">Multi-pass membrane protein</topology>
    </subcellularLocation>
</comment>
<comment type="similarity">
    <text evidence="3">Belongs to the tellurite-resistance/dicarboxylate transporter (TDT) family.</text>
</comment>
<comment type="sequence caution" evidence="3">
    <conflict type="erroneous initiation">
        <sequence resource="EMBL-CDS" id="EEQ35596"/>
    </conflict>
</comment>